<reference key="1">
    <citation type="journal article" date="2007" name="Genome Biol.">
        <title>Characterization and modeling of the Haemophilus influenzae core and supragenomes based on the complete genomic sequences of Rd and 12 clinical nontypeable strains.</title>
        <authorList>
            <person name="Hogg J.S."/>
            <person name="Hu F.Z."/>
            <person name="Janto B."/>
            <person name="Boissy R."/>
            <person name="Hayes J."/>
            <person name="Keefe R."/>
            <person name="Post J.C."/>
            <person name="Ehrlich G.D."/>
        </authorList>
    </citation>
    <scope>NUCLEOTIDE SEQUENCE [LARGE SCALE GENOMIC DNA]</scope>
    <source>
        <strain>PittGG</strain>
    </source>
</reference>
<feature type="chain" id="PRO_1000046029" description="Ribosomal protein L11 methyltransferase">
    <location>
        <begin position="1"/>
        <end position="295"/>
    </location>
</feature>
<feature type="binding site" evidence="1">
    <location>
        <position position="145"/>
    </location>
    <ligand>
        <name>S-adenosyl-L-methionine</name>
        <dbReference type="ChEBI" id="CHEBI:59789"/>
    </ligand>
</feature>
<feature type="binding site" evidence="1">
    <location>
        <position position="166"/>
    </location>
    <ligand>
        <name>S-adenosyl-L-methionine</name>
        <dbReference type="ChEBI" id="CHEBI:59789"/>
    </ligand>
</feature>
<feature type="binding site" evidence="1">
    <location>
        <position position="188"/>
    </location>
    <ligand>
        <name>S-adenosyl-L-methionine</name>
        <dbReference type="ChEBI" id="CHEBI:59789"/>
    </ligand>
</feature>
<feature type="binding site" evidence="1">
    <location>
        <position position="230"/>
    </location>
    <ligand>
        <name>S-adenosyl-L-methionine</name>
        <dbReference type="ChEBI" id="CHEBI:59789"/>
    </ligand>
</feature>
<protein>
    <recommendedName>
        <fullName evidence="1">Ribosomal protein L11 methyltransferase</fullName>
        <shortName evidence="1">L11 Mtase</shortName>
        <ecNumber evidence="1">2.1.1.-</ecNumber>
    </recommendedName>
</protein>
<gene>
    <name evidence="1" type="primary">prmA</name>
    <name type="ordered locus">CGSHiGG_08465</name>
</gene>
<proteinExistence type="inferred from homology"/>
<evidence type="ECO:0000255" key="1">
    <source>
        <dbReference type="HAMAP-Rule" id="MF_00735"/>
    </source>
</evidence>
<comment type="function">
    <text evidence="1">Methylates ribosomal protein L11.</text>
</comment>
<comment type="catalytic activity">
    <reaction evidence="1">
        <text>L-lysyl-[protein] + 3 S-adenosyl-L-methionine = N(6),N(6),N(6)-trimethyl-L-lysyl-[protein] + 3 S-adenosyl-L-homocysteine + 3 H(+)</text>
        <dbReference type="Rhea" id="RHEA:54192"/>
        <dbReference type="Rhea" id="RHEA-COMP:9752"/>
        <dbReference type="Rhea" id="RHEA-COMP:13826"/>
        <dbReference type="ChEBI" id="CHEBI:15378"/>
        <dbReference type="ChEBI" id="CHEBI:29969"/>
        <dbReference type="ChEBI" id="CHEBI:57856"/>
        <dbReference type="ChEBI" id="CHEBI:59789"/>
        <dbReference type="ChEBI" id="CHEBI:61961"/>
    </reaction>
</comment>
<comment type="subcellular location">
    <subcellularLocation>
        <location evidence="1">Cytoplasm</location>
    </subcellularLocation>
</comment>
<comment type="similarity">
    <text evidence="1">Belongs to the methyltransferase superfamily. PrmA family.</text>
</comment>
<name>PRMA_HAEIG</name>
<keyword id="KW-0963">Cytoplasm</keyword>
<keyword id="KW-0489">Methyltransferase</keyword>
<keyword id="KW-0949">S-adenosyl-L-methionine</keyword>
<keyword id="KW-0808">Transferase</keyword>
<dbReference type="EC" id="2.1.1.-" evidence="1"/>
<dbReference type="EMBL" id="CP000672">
    <property type="protein sequence ID" value="ABR00523.1"/>
    <property type="molecule type" value="Genomic_DNA"/>
</dbReference>
<dbReference type="SMR" id="A5UIB7"/>
<dbReference type="KEGG" id="hiq:CGSHiGG_08465"/>
<dbReference type="HOGENOM" id="CLU_049382_4_1_6"/>
<dbReference type="Proteomes" id="UP000001990">
    <property type="component" value="Chromosome"/>
</dbReference>
<dbReference type="GO" id="GO:0005829">
    <property type="term" value="C:cytosol"/>
    <property type="evidence" value="ECO:0007669"/>
    <property type="project" value="TreeGrafter"/>
</dbReference>
<dbReference type="GO" id="GO:0016279">
    <property type="term" value="F:protein-lysine N-methyltransferase activity"/>
    <property type="evidence" value="ECO:0007669"/>
    <property type="project" value="TreeGrafter"/>
</dbReference>
<dbReference type="GO" id="GO:0032259">
    <property type="term" value="P:methylation"/>
    <property type="evidence" value="ECO:0007669"/>
    <property type="project" value="UniProtKB-KW"/>
</dbReference>
<dbReference type="CDD" id="cd02440">
    <property type="entry name" value="AdoMet_MTases"/>
    <property type="match status" value="1"/>
</dbReference>
<dbReference type="Gene3D" id="3.40.50.150">
    <property type="entry name" value="Vaccinia Virus protein VP39"/>
    <property type="match status" value="1"/>
</dbReference>
<dbReference type="HAMAP" id="MF_00735">
    <property type="entry name" value="Methyltr_PrmA"/>
    <property type="match status" value="1"/>
</dbReference>
<dbReference type="InterPro" id="IPR050078">
    <property type="entry name" value="Ribosomal_L11_MeTrfase_PrmA"/>
</dbReference>
<dbReference type="InterPro" id="IPR004498">
    <property type="entry name" value="Ribosomal_PrmA_MeTrfase"/>
</dbReference>
<dbReference type="InterPro" id="IPR029063">
    <property type="entry name" value="SAM-dependent_MTases_sf"/>
</dbReference>
<dbReference type="NCBIfam" id="TIGR00406">
    <property type="entry name" value="prmA"/>
    <property type="match status" value="1"/>
</dbReference>
<dbReference type="PANTHER" id="PTHR43648">
    <property type="entry name" value="ELECTRON TRANSFER FLAVOPROTEIN BETA SUBUNIT LYSINE METHYLTRANSFERASE"/>
    <property type="match status" value="1"/>
</dbReference>
<dbReference type="PANTHER" id="PTHR43648:SF1">
    <property type="entry name" value="ELECTRON TRANSFER FLAVOPROTEIN BETA SUBUNIT LYSINE METHYLTRANSFERASE"/>
    <property type="match status" value="1"/>
</dbReference>
<dbReference type="Pfam" id="PF06325">
    <property type="entry name" value="PrmA"/>
    <property type="match status" value="1"/>
</dbReference>
<dbReference type="PIRSF" id="PIRSF000401">
    <property type="entry name" value="RPL11_MTase"/>
    <property type="match status" value="1"/>
</dbReference>
<dbReference type="SUPFAM" id="SSF53335">
    <property type="entry name" value="S-adenosyl-L-methionine-dependent methyltransferases"/>
    <property type="match status" value="1"/>
</dbReference>
<sequence>MAWIQIRLNSTNEKAEQMSDFLEEIGSVSVTFMDSQDTPIFEPLPGETRLWGNTDVIALFDAETDMAEIVRLLKEAKHLDSNTAYKIEQIEDKDWEREWMDNFHPMQFGKRLWICPSWRDVPDENAVNVMLDPGLAFGTGTHPTTALCLEWLDGLDLKDKSVIDFGCGSGILAIAALKLGAKSAVGIDIDPQAILASRNNAEQNGVADRLQLFLSDEKPSDLKADVVVANILAGPLKELYPIISQLVKPNGDLGLSGILETQAQSVCDAYTQTFALEPVAAREEWCRITGKLKTL</sequence>
<accession>A5UIB7</accession>
<organism>
    <name type="scientific">Haemophilus influenzae (strain PittGG)</name>
    <dbReference type="NCBI Taxonomy" id="374931"/>
    <lineage>
        <taxon>Bacteria</taxon>
        <taxon>Pseudomonadati</taxon>
        <taxon>Pseudomonadota</taxon>
        <taxon>Gammaproteobacteria</taxon>
        <taxon>Pasteurellales</taxon>
        <taxon>Pasteurellaceae</taxon>
        <taxon>Haemophilus</taxon>
    </lineage>
</organism>